<proteinExistence type="evidence at protein level"/>
<evidence type="ECO:0000269" key="1">
    <source ref="1"/>
</evidence>
<evidence type="ECO:0000305" key="2"/>
<accession>P83454</accession>
<sequence length="12" mass="1183">GLTDQKSAPPGL</sequence>
<comment type="function">
    <text evidence="1 2">Serine protease.</text>
</comment>
<comment type="similarity">
    <text evidence="2">Belongs to the peptidase S8 family.</text>
</comment>
<keyword id="KW-0903">Direct protein sequencing</keyword>
<keyword id="KW-0378">Hydrolase</keyword>
<keyword id="KW-0645">Protease</keyword>
<keyword id="KW-0720">Serine protease</keyword>
<name>NCP3_COPCM</name>
<feature type="chain" id="PRO_0000076411" description="Alkaline protease Cc3">
    <location>
        <begin position="1"/>
        <end position="12" status="greater than"/>
    </location>
</feature>
<feature type="non-terminal residue" evidence="2">
    <location>
        <position position="12"/>
    </location>
</feature>
<protein>
    <recommendedName>
        <fullName>Alkaline protease Cc3</fullName>
        <ecNumber>3.4.21.-</ecNumber>
    </recommendedName>
</protein>
<reference key="1">
    <citation type="submission" date="2002-07" db="UniProtKB">
        <authorList>
            <person name="Zhao M."/>
            <person name="Keqin Z."/>
        </authorList>
    </citation>
    <scope>PROTEIN SEQUENCE</scope>
    <scope>FUNCTION</scope>
    <source>
        <strain evidence="2">617</strain>
    </source>
</reference>
<organism evidence="2">
    <name type="scientific">Coprinus comatus</name>
    <name type="common">Shaggy mane</name>
    <dbReference type="NCBI Taxonomy" id="56187"/>
    <lineage>
        <taxon>Eukaryota</taxon>
        <taxon>Fungi</taxon>
        <taxon>Dikarya</taxon>
        <taxon>Basidiomycota</taxon>
        <taxon>Agaricomycotina</taxon>
        <taxon>Agaricomycetes</taxon>
        <taxon>Agaricomycetidae</taxon>
        <taxon>Agaricales</taxon>
        <taxon>Agaricineae</taxon>
        <taxon>Agaricaceae</taxon>
        <taxon>Coprinus</taxon>
    </lineage>
</organism>
<dbReference type="EC" id="3.4.21.-"/>
<dbReference type="GO" id="GO:0008236">
    <property type="term" value="F:serine-type peptidase activity"/>
    <property type="evidence" value="ECO:0007669"/>
    <property type="project" value="UniProtKB-KW"/>
</dbReference>
<dbReference type="GO" id="GO:0006508">
    <property type="term" value="P:proteolysis"/>
    <property type="evidence" value="ECO:0007669"/>
    <property type="project" value="UniProtKB-KW"/>
</dbReference>